<keyword id="KW-0426">Late protein</keyword>
<keyword id="KW-0472">Membrane</keyword>
<keyword id="KW-0812">Transmembrane</keyword>
<keyword id="KW-1133">Transmembrane helix</keyword>
<keyword id="KW-0261">Viral envelope protein</keyword>
<keyword id="KW-0946">Virion</keyword>
<dbReference type="EMBL" id="L22579">
    <property type="protein sequence ID" value="AAA60807.1"/>
    <property type="molecule type" value="Genomic_DNA"/>
</dbReference>
<dbReference type="PIR" id="T28497">
    <property type="entry name" value="T28497"/>
</dbReference>
<dbReference type="RefSeq" id="NP_042103.1">
    <property type="nucleotide sequence ID" value="NC_001611.1"/>
</dbReference>
<dbReference type="GeneID" id="1486460"/>
<dbReference type="KEGG" id="vg:1486460"/>
<dbReference type="Proteomes" id="UP000119805">
    <property type="component" value="Segment"/>
</dbReference>
<dbReference type="GO" id="GO:0016020">
    <property type="term" value="C:membrane"/>
    <property type="evidence" value="ECO:0007669"/>
    <property type="project" value="UniProtKB-KW"/>
</dbReference>
<dbReference type="GO" id="GO:0019031">
    <property type="term" value="C:viral envelope"/>
    <property type="evidence" value="ECO:0007669"/>
    <property type="project" value="UniProtKB-KW"/>
</dbReference>
<dbReference type="GO" id="GO:0055036">
    <property type="term" value="C:virion membrane"/>
    <property type="evidence" value="ECO:0007669"/>
    <property type="project" value="UniProtKB-SubCell"/>
</dbReference>
<dbReference type="InterPro" id="IPR006803">
    <property type="entry name" value="Poxvirus_I5"/>
</dbReference>
<dbReference type="Pfam" id="PF04713">
    <property type="entry name" value="Pox_I5"/>
    <property type="match status" value="1"/>
</dbReference>
<dbReference type="PIRSF" id="PIRSF003768">
    <property type="entry name" value="VAC_I5L"/>
    <property type="match status" value="1"/>
</dbReference>
<feature type="chain" id="PRO_0000448201" description="Protein OPG081">
    <location>
        <begin position="1"/>
        <end position="79"/>
    </location>
</feature>
<feature type="topological domain" description="Intravirion" evidence="2">
    <location>
        <begin position="1"/>
        <end position="3"/>
    </location>
</feature>
<feature type="transmembrane region" description="Helical" evidence="2">
    <location>
        <begin position="4"/>
        <end position="24"/>
    </location>
</feature>
<feature type="topological domain" description="Virion surface" evidence="2">
    <location>
        <begin position="25"/>
        <end position="47"/>
    </location>
</feature>
<feature type="transmembrane region" description="Helical" evidence="2">
    <location>
        <begin position="48"/>
        <end position="68"/>
    </location>
</feature>
<feature type="topological domain" description="Intravirion" evidence="2">
    <location>
        <begin position="69"/>
        <end position="79"/>
    </location>
</feature>
<proteinExistence type="inferred from homology"/>
<evidence type="ECO:0000250" key="1">
    <source>
        <dbReference type="UniProtKB" id="P12924"/>
    </source>
</evidence>
<evidence type="ECO:0000255" key="2"/>
<evidence type="ECO:0000305" key="3"/>
<organism>
    <name type="scientific">Variola virus</name>
    <dbReference type="NCBI Taxonomy" id="10255"/>
    <lineage>
        <taxon>Viruses</taxon>
        <taxon>Varidnaviria</taxon>
        <taxon>Bamfordvirae</taxon>
        <taxon>Nucleocytoviricota</taxon>
        <taxon>Pokkesviricetes</taxon>
        <taxon>Chitovirales</taxon>
        <taxon>Poxviridae</taxon>
        <taxon>Chordopoxvirinae</taxon>
        <taxon>Orthopoxvirus</taxon>
    </lineage>
</organism>
<organismHost>
    <name type="scientific">Homo sapiens</name>
    <name type="common">Human</name>
    <dbReference type="NCBI Taxonomy" id="9606"/>
</organismHost>
<name>PG081_VARV</name>
<comment type="function">
    <text evidence="1">Envelope protein.</text>
</comment>
<comment type="subcellular location">
    <subcellularLocation>
        <location evidence="1">Virion membrane</location>
        <topology evidence="1">Multi-pass membrane protein</topology>
    </subcellularLocation>
    <text evidence="1">Probably localizes to the membrane of mature virions (MV).</text>
</comment>
<comment type="induction">
    <text evidence="1">Expressed in the intermediate phase of the viral replicative cycle.</text>
</comment>
<comment type="similarity">
    <text evidence="3">Belongs to the orthopoxvirus OPG081 family.</text>
</comment>
<gene>
    <name type="primary">OPG081</name>
    <name type="ORF">I5L</name>
    <name type="ORF">K5L</name>
</gene>
<sequence length="79" mass="8778">MADAITVLTAIGITVLMLLMVISGTAMIVKELNPNDIFTMQSLKFNRAVTIFKYIGLFIYIPGTIILYATYIKSLLMKS</sequence>
<accession>P0DSS2</accession>
<accession>P33001</accession>
<protein>
    <recommendedName>
        <fullName>Protein OPG081</fullName>
    </recommendedName>
    <alternativeName>
        <fullName>Protein I5</fullName>
    </alternativeName>
</protein>
<reference key="1">
    <citation type="journal article" date="1993" name="Nature">
        <title>Potential virulence determinants in terminal regions of variola smallpox virus genome.</title>
        <authorList>
            <person name="Massung R.F."/>
            <person name="Esposito J.J."/>
            <person name="Liu L.I."/>
            <person name="Qi J."/>
            <person name="Utterback T.R."/>
            <person name="Knight J.C."/>
            <person name="Aubin L."/>
            <person name="Yuran T.E."/>
            <person name="Parsons J.M."/>
            <person name="Loparev V.N."/>
            <person name="Selivanov N.A."/>
            <person name="Cavallaro K.F."/>
            <person name="Kerlavage A.R."/>
            <person name="Mahy B.W.J."/>
            <person name="Venter J.C."/>
        </authorList>
    </citation>
    <scope>NUCLEOTIDE SEQUENCE [GENOMIC DNA]</scope>
    <source>
        <strain>Bangladesh-1975</strain>
    </source>
</reference>